<sequence>MRKPFIAGNWKMYKTPVEAAGFVRELIDSLKDVSGVDVAVCPPFPALWPVKEALEGSNIALGAQNMHFEKEGAFTGEVSPAMLQDIGVKYVILGHSERRAYFGETDELINQKIKAAFTWGLNPIFCVGETLEERERGITKAVVEIQVLKGLAGVTAEQAENLTIAYEPVWAIGTGKTATPDDAQEVCQFIRELLVKLFGREIADKVRIQYGGSVKPENIKELIAKPDIDGALVGGASLKVESFTAIVKGSI</sequence>
<protein>
    <recommendedName>
        <fullName evidence="1">Triosephosphate isomerase</fullName>
        <shortName evidence="1">TIM</shortName>
        <shortName evidence="1">TPI</shortName>
        <ecNumber evidence="1">5.3.1.1</ecNumber>
    </recommendedName>
    <alternativeName>
        <fullName evidence="1">Triose-phosphate isomerase</fullName>
    </alternativeName>
</protein>
<gene>
    <name evidence="1" type="primary">tpiA</name>
    <name type="ordered locus">CHY_0282</name>
</gene>
<proteinExistence type="inferred from homology"/>
<name>TPIS_CARHZ</name>
<comment type="function">
    <text evidence="1">Involved in the gluconeogenesis. Catalyzes stereospecifically the conversion of dihydroxyacetone phosphate (DHAP) to D-glyceraldehyde-3-phosphate (G3P).</text>
</comment>
<comment type="catalytic activity">
    <reaction evidence="1">
        <text>D-glyceraldehyde 3-phosphate = dihydroxyacetone phosphate</text>
        <dbReference type="Rhea" id="RHEA:18585"/>
        <dbReference type="ChEBI" id="CHEBI:57642"/>
        <dbReference type="ChEBI" id="CHEBI:59776"/>
        <dbReference type="EC" id="5.3.1.1"/>
    </reaction>
</comment>
<comment type="pathway">
    <text evidence="1">Carbohydrate biosynthesis; gluconeogenesis.</text>
</comment>
<comment type="pathway">
    <text evidence="1">Carbohydrate degradation; glycolysis; D-glyceraldehyde 3-phosphate from glycerone phosphate: step 1/1.</text>
</comment>
<comment type="subunit">
    <text evidence="1">Homodimer.</text>
</comment>
<comment type="subcellular location">
    <subcellularLocation>
        <location evidence="1">Cytoplasm</location>
    </subcellularLocation>
</comment>
<comment type="similarity">
    <text evidence="1">Belongs to the triosephosphate isomerase family.</text>
</comment>
<keyword id="KW-0963">Cytoplasm</keyword>
<keyword id="KW-0312">Gluconeogenesis</keyword>
<keyword id="KW-0324">Glycolysis</keyword>
<keyword id="KW-0413">Isomerase</keyword>
<keyword id="KW-1185">Reference proteome</keyword>
<organism>
    <name type="scientific">Carboxydothermus hydrogenoformans (strain ATCC BAA-161 / DSM 6008 / Z-2901)</name>
    <dbReference type="NCBI Taxonomy" id="246194"/>
    <lineage>
        <taxon>Bacteria</taxon>
        <taxon>Bacillati</taxon>
        <taxon>Bacillota</taxon>
        <taxon>Clostridia</taxon>
        <taxon>Thermoanaerobacterales</taxon>
        <taxon>Thermoanaerobacteraceae</taxon>
        <taxon>Carboxydothermus</taxon>
    </lineage>
</organism>
<evidence type="ECO:0000255" key="1">
    <source>
        <dbReference type="HAMAP-Rule" id="MF_00147"/>
    </source>
</evidence>
<feature type="chain" id="PRO_0000307443" description="Triosephosphate isomerase">
    <location>
        <begin position="1"/>
        <end position="251"/>
    </location>
</feature>
<feature type="active site" description="Electrophile" evidence="1">
    <location>
        <position position="95"/>
    </location>
</feature>
<feature type="active site" description="Proton acceptor" evidence="1">
    <location>
        <position position="167"/>
    </location>
</feature>
<feature type="binding site" evidence="1">
    <location>
        <begin position="9"/>
        <end position="11"/>
    </location>
    <ligand>
        <name>substrate</name>
    </ligand>
</feature>
<feature type="binding site" evidence="1">
    <location>
        <position position="173"/>
    </location>
    <ligand>
        <name>substrate</name>
    </ligand>
</feature>
<feature type="binding site" evidence="1">
    <location>
        <position position="213"/>
    </location>
    <ligand>
        <name>substrate</name>
    </ligand>
</feature>
<feature type="binding site" evidence="1">
    <location>
        <begin position="234"/>
        <end position="235"/>
    </location>
    <ligand>
        <name>substrate</name>
    </ligand>
</feature>
<reference key="1">
    <citation type="journal article" date="2005" name="PLoS Genet.">
        <title>Life in hot carbon monoxide: the complete genome sequence of Carboxydothermus hydrogenoformans Z-2901.</title>
        <authorList>
            <person name="Wu M."/>
            <person name="Ren Q."/>
            <person name="Durkin A.S."/>
            <person name="Daugherty S.C."/>
            <person name="Brinkac L.M."/>
            <person name="Dodson R.J."/>
            <person name="Madupu R."/>
            <person name="Sullivan S.A."/>
            <person name="Kolonay J.F."/>
            <person name="Nelson W.C."/>
            <person name="Tallon L.J."/>
            <person name="Jones K.M."/>
            <person name="Ulrich L.E."/>
            <person name="Gonzalez J.M."/>
            <person name="Zhulin I.B."/>
            <person name="Robb F.T."/>
            <person name="Eisen J.A."/>
        </authorList>
    </citation>
    <scope>NUCLEOTIDE SEQUENCE [LARGE SCALE GENOMIC DNA]</scope>
    <source>
        <strain>ATCC BAA-161 / DSM 6008 / Z-2901</strain>
    </source>
</reference>
<accession>Q3AFD0</accession>
<dbReference type="EC" id="5.3.1.1" evidence="1"/>
<dbReference type="EMBL" id="CP000141">
    <property type="protein sequence ID" value="ABB15245.1"/>
    <property type="molecule type" value="Genomic_DNA"/>
</dbReference>
<dbReference type="RefSeq" id="WP_011343230.1">
    <property type="nucleotide sequence ID" value="NC_007503.1"/>
</dbReference>
<dbReference type="SMR" id="Q3AFD0"/>
<dbReference type="FunCoup" id="Q3AFD0">
    <property type="interactions" value="406"/>
</dbReference>
<dbReference type="STRING" id="246194.CHY_0282"/>
<dbReference type="KEGG" id="chy:CHY_0282"/>
<dbReference type="eggNOG" id="COG0149">
    <property type="taxonomic scope" value="Bacteria"/>
</dbReference>
<dbReference type="HOGENOM" id="CLU_024251_2_3_9"/>
<dbReference type="InParanoid" id="Q3AFD0"/>
<dbReference type="OrthoDB" id="9809429at2"/>
<dbReference type="UniPathway" id="UPA00109">
    <property type="reaction ID" value="UER00189"/>
</dbReference>
<dbReference type="UniPathway" id="UPA00138"/>
<dbReference type="Proteomes" id="UP000002706">
    <property type="component" value="Chromosome"/>
</dbReference>
<dbReference type="GO" id="GO:0005829">
    <property type="term" value="C:cytosol"/>
    <property type="evidence" value="ECO:0007669"/>
    <property type="project" value="TreeGrafter"/>
</dbReference>
<dbReference type="GO" id="GO:0004807">
    <property type="term" value="F:triose-phosphate isomerase activity"/>
    <property type="evidence" value="ECO:0007669"/>
    <property type="project" value="UniProtKB-UniRule"/>
</dbReference>
<dbReference type="GO" id="GO:0006094">
    <property type="term" value="P:gluconeogenesis"/>
    <property type="evidence" value="ECO:0007669"/>
    <property type="project" value="UniProtKB-UniRule"/>
</dbReference>
<dbReference type="GO" id="GO:0046166">
    <property type="term" value="P:glyceraldehyde-3-phosphate biosynthetic process"/>
    <property type="evidence" value="ECO:0007669"/>
    <property type="project" value="TreeGrafter"/>
</dbReference>
<dbReference type="GO" id="GO:0019563">
    <property type="term" value="P:glycerol catabolic process"/>
    <property type="evidence" value="ECO:0007669"/>
    <property type="project" value="TreeGrafter"/>
</dbReference>
<dbReference type="GO" id="GO:0006096">
    <property type="term" value="P:glycolytic process"/>
    <property type="evidence" value="ECO:0007669"/>
    <property type="project" value="UniProtKB-UniRule"/>
</dbReference>
<dbReference type="CDD" id="cd00311">
    <property type="entry name" value="TIM"/>
    <property type="match status" value="1"/>
</dbReference>
<dbReference type="FunFam" id="3.20.20.70:FF:000016">
    <property type="entry name" value="Triosephosphate isomerase"/>
    <property type="match status" value="1"/>
</dbReference>
<dbReference type="Gene3D" id="3.20.20.70">
    <property type="entry name" value="Aldolase class I"/>
    <property type="match status" value="1"/>
</dbReference>
<dbReference type="HAMAP" id="MF_00147_B">
    <property type="entry name" value="TIM_B"/>
    <property type="match status" value="1"/>
</dbReference>
<dbReference type="InterPro" id="IPR013785">
    <property type="entry name" value="Aldolase_TIM"/>
</dbReference>
<dbReference type="InterPro" id="IPR035990">
    <property type="entry name" value="TIM_sf"/>
</dbReference>
<dbReference type="InterPro" id="IPR022896">
    <property type="entry name" value="TrioseP_Isoase_bac/euk"/>
</dbReference>
<dbReference type="InterPro" id="IPR000652">
    <property type="entry name" value="Triosephosphate_isomerase"/>
</dbReference>
<dbReference type="InterPro" id="IPR020861">
    <property type="entry name" value="Triosephosphate_isomerase_AS"/>
</dbReference>
<dbReference type="NCBIfam" id="TIGR00419">
    <property type="entry name" value="tim"/>
    <property type="match status" value="1"/>
</dbReference>
<dbReference type="PANTHER" id="PTHR21139">
    <property type="entry name" value="TRIOSEPHOSPHATE ISOMERASE"/>
    <property type="match status" value="1"/>
</dbReference>
<dbReference type="PANTHER" id="PTHR21139:SF42">
    <property type="entry name" value="TRIOSEPHOSPHATE ISOMERASE"/>
    <property type="match status" value="1"/>
</dbReference>
<dbReference type="Pfam" id="PF00121">
    <property type="entry name" value="TIM"/>
    <property type="match status" value="1"/>
</dbReference>
<dbReference type="SUPFAM" id="SSF51351">
    <property type="entry name" value="Triosephosphate isomerase (TIM)"/>
    <property type="match status" value="1"/>
</dbReference>
<dbReference type="PROSITE" id="PS00171">
    <property type="entry name" value="TIM_1"/>
    <property type="match status" value="1"/>
</dbReference>
<dbReference type="PROSITE" id="PS51440">
    <property type="entry name" value="TIM_2"/>
    <property type="match status" value="1"/>
</dbReference>